<reference key="1">
    <citation type="journal article" date="2006" name="J. Bacteriol.">
        <title>Comparison of the genome sequence of the poultry pathogen Bordetella avium with those of B. bronchiseptica, B. pertussis, and B. parapertussis reveals extensive diversity in surface structures associated with host interaction.</title>
        <authorList>
            <person name="Sebaihia M."/>
            <person name="Preston A."/>
            <person name="Maskell D.J."/>
            <person name="Kuzmiak H."/>
            <person name="Connell T.D."/>
            <person name="King N.D."/>
            <person name="Orndorff P.E."/>
            <person name="Miyamoto D.M."/>
            <person name="Thomson N.R."/>
            <person name="Harris D."/>
            <person name="Goble A."/>
            <person name="Lord A."/>
            <person name="Murphy L."/>
            <person name="Quail M.A."/>
            <person name="Rutter S."/>
            <person name="Squares R."/>
            <person name="Squares S."/>
            <person name="Woodward J."/>
            <person name="Parkhill J."/>
            <person name="Temple L.M."/>
        </authorList>
    </citation>
    <scope>NUCLEOTIDE SEQUENCE [LARGE SCALE GENOMIC DNA]</scope>
    <source>
        <strain>197N</strain>
    </source>
</reference>
<feature type="chain" id="PRO_0000271904" description="Ribosomal RNA small subunit methyltransferase A">
    <location>
        <begin position="1"/>
        <end position="262"/>
    </location>
</feature>
<feature type="binding site" evidence="1">
    <location>
        <position position="13"/>
    </location>
    <ligand>
        <name>S-adenosyl-L-methionine</name>
        <dbReference type="ChEBI" id="CHEBI:59789"/>
    </ligand>
</feature>
<feature type="binding site" evidence="1">
    <location>
        <position position="15"/>
    </location>
    <ligand>
        <name>S-adenosyl-L-methionine</name>
        <dbReference type="ChEBI" id="CHEBI:59789"/>
    </ligand>
</feature>
<feature type="binding site" evidence="1">
    <location>
        <position position="40"/>
    </location>
    <ligand>
        <name>S-adenosyl-L-methionine</name>
        <dbReference type="ChEBI" id="CHEBI:59789"/>
    </ligand>
</feature>
<feature type="binding site" evidence="1">
    <location>
        <position position="61"/>
    </location>
    <ligand>
        <name>S-adenosyl-L-methionine</name>
        <dbReference type="ChEBI" id="CHEBI:59789"/>
    </ligand>
</feature>
<feature type="binding site" evidence="1">
    <location>
        <position position="85"/>
    </location>
    <ligand>
        <name>S-adenosyl-L-methionine</name>
        <dbReference type="ChEBI" id="CHEBI:59789"/>
    </ligand>
</feature>
<feature type="binding site" evidence="1">
    <location>
        <position position="103"/>
    </location>
    <ligand>
        <name>S-adenosyl-L-methionine</name>
        <dbReference type="ChEBI" id="CHEBI:59789"/>
    </ligand>
</feature>
<sequence>MSQHQARKRFGQHFLTDESVIDAIVRAIAPARDDAIVEIGPGLSALTAPLIARLNRLSVVEIDRDLAARLRKKYPPEQLSVVEADALTVDFRQFGAGMRVVGNLPYNISSPLLFHLMGAADLVRDQHFMLQREVIDRMVAEPRSADYGRLSVMLQSRYRMEKLFDVPPEAFDPPPRVVSAVVRMVPLGPDRPQPASEAAFEAVVARAFSQRRKMLRRGLGDWAAHVPWDDIGVPPTARAEEVGVAQFIRLTDALLAAGVIKA</sequence>
<evidence type="ECO:0000255" key="1">
    <source>
        <dbReference type="HAMAP-Rule" id="MF_00607"/>
    </source>
</evidence>
<protein>
    <recommendedName>
        <fullName evidence="1">Ribosomal RNA small subunit methyltransferase A</fullName>
        <ecNumber evidence="1">2.1.1.182</ecNumber>
    </recommendedName>
    <alternativeName>
        <fullName evidence="1">16S rRNA (adenine(1518)-N(6)/adenine(1519)-N(6))-dimethyltransferase</fullName>
    </alternativeName>
    <alternativeName>
        <fullName evidence="1">16S rRNA dimethyladenosine transferase</fullName>
    </alternativeName>
    <alternativeName>
        <fullName evidence="1">16S rRNA dimethylase</fullName>
    </alternativeName>
    <alternativeName>
        <fullName evidence="1">S-adenosylmethionine-6-N', N'-adenosyl(rRNA) dimethyltransferase</fullName>
    </alternativeName>
</protein>
<proteinExistence type="inferred from homology"/>
<gene>
    <name evidence="1" type="primary">rsmA</name>
    <name evidence="1" type="synonym">ksgA</name>
    <name type="ordered locus">BAV0696</name>
</gene>
<organism>
    <name type="scientific">Bordetella avium (strain 197N)</name>
    <dbReference type="NCBI Taxonomy" id="360910"/>
    <lineage>
        <taxon>Bacteria</taxon>
        <taxon>Pseudomonadati</taxon>
        <taxon>Pseudomonadota</taxon>
        <taxon>Betaproteobacteria</taxon>
        <taxon>Burkholderiales</taxon>
        <taxon>Alcaligenaceae</taxon>
        <taxon>Bordetella</taxon>
    </lineage>
</organism>
<keyword id="KW-0963">Cytoplasm</keyword>
<keyword id="KW-0489">Methyltransferase</keyword>
<keyword id="KW-1185">Reference proteome</keyword>
<keyword id="KW-0694">RNA-binding</keyword>
<keyword id="KW-0698">rRNA processing</keyword>
<keyword id="KW-0949">S-adenosyl-L-methionine</keyword>
<keyword id="KW-0808">Transferase</keyword>
<dbReference type="EC" id="2.1.1.182" evidence="1"/>
<dbReference type="EMBL" id="AM167904">
    <property type="protein sequence ID" value="CAJ48302.1"/>
    <property type="molecule type" value="Genomic_DNA"/>
</dbReference>
<dbReference type="RefSeq" id="WP_012416392.1">
    <property type="nucleotide sequence ID" value="NC_010645.1"/>
</dbReference>
<dbReference type="SMR" id="Q2KXA2"/>
<dbReference type="STRING" id="360910.BAV0696"/>
<dbReference type="KEGG" id="bav:BAV0696"/>
<dbReference type="eggNOG" id="COG0030">
    <property type="taxonomic scope" value="Bacteria"/>
</dbReference>
<dbReference type="HOGENOM" id="CLU_041220_0_1_4"/>
<dbReference type="OrthoDB" id="9814755at2"/>
<dbReference type="Proteomes" id="UP000001977">
    <property type="component" value="Chromosome"/>
</dbReference>
<dbReference type="GO" id="GO:0005829">
    <property type="term" value="C:cytosol"/>
    <property type="evidence" value="ECO:0007669"/>
    <property type="project" value="TreeGrafter"/>
</dbReference>
<dbReference type="GO" id="GO:0052908">
    <property type="term" value="F:16S rRNA (adenine(1518)-N(6)/adenine(1519)-N(6))-dimethyltransferase activity"/>
    <property type="evidence" value="ECO:0007669"/>
    <property type="project" value="UniProtKB-EC"/>
</dbReference>
<dbReference type="GO" id="GO:0003723">
    <property type="term" value="F:RNA binding"/>
    <property type="evidence" value="ECO:0007669"/>
    <property type="project" value="UniProtKB-KW"/>
</dbReference>
<dbReference type="FunFam" id="1.10.8.100:FF:000001">
    <property type="entry name" value="Ribosomal RNA small subunit methyltransferase A"/>
    <property type="match status" value="1"/>
</dbReference>
<dbReference type="Gene3D" id="1.10.8.100">
    <property type="entry name" value="Ribosomal RNA adenine dimethylase-like, domain 2"/>
    <property type="match status" value="1"/>
</dbReference>
<dbReference type="Gene3D" id="3.40.50.150">
    <property type="entry name" value="Vaccinia Virus protein VP39"/>
    <property type="match status" value="1"/>
</dbReference>
<dbReference type="HAMAP" id="MF_00607">
    <property type="entry name" value="16SrRNA_methyltr_A"/>
    <property type="match status" value="1"/>
</dbReference>
<dbReference type="InterPro" id="IPR001737">
    <property type="entry name" value="KsgA/Erm"/>
</dbReference>
<dbReference type="InterPro" id="IPR023165">
    <property type="entry name" value="rRNA_Ade_diMease-like_C"/>
</dbReference>
<dbReference type="InterPro" id="IPR020596">
    <property type="entry name" value="rRNA_Ade_Mease_Trfase_CS"/>
</dbReference>
<dbReference type="InterPro" id="IPR020598">
    <property type="entry name" value="rRNA_Ade_methylase_Trfase_N"/>
</dbReference>
<dbReference type="InterPro" id="IPR011530">
    <property type="entry name" value="rRNA_adenine_dimethylase"/>
</dbReference>
<dbReference type="InterPro" id="IPR029063">
    <property type="entry name" value="SAM-dependent_MTases_sf"/>
</dbReference>
<dbReference type="NCBIfam" id="TIGR00755">
    <property type="entry name" value="ksgA"/>
    <property type="match status" value="1"/>
</dbReference>
<dbReference type="PANTHER" id="PTHR11727">
    <property type="entry name" value="DIMETHYLADENOSINE TRANSFERASE"/>
    <property type="match status" value="1"/>
</dbReference>
<dbReference type="PANTHER" id="PTHR11727:SF7">
    <property type="entry name" value="DIMETHYLADENOSINE TRANSFERASE-RELATED"/>
    <property type="match status" value="1"/>
</dbReference>
<dbReference type="Pfam" id="PF00398">
    <property type="entry name" value="RrnaAD"/>
    <property type="match status" value="1"/>
</dbReference>
<dbReference type="SMART" id="SM00650">
    <property type="entry name" value="rADc"/>
    <property type="match status" value="1"/>
</dbReference>
<dbReference type="SUPFAM" id="SSF53335">
    <property type="entry name" value="S-adenosyl-L-methionine-dependent methyltransferases"/>
    <property type="match status" value="1"/>
</dbReference>
<dbReference type="PROSITE" id="PS01131">
    <property type="entry name" value="RRNA_A_DIMETH"/>
    <property type="match status" value="1"/>
</dbReference>
<dbReference type="PROSITE" id="PS51689">
    <property type="entry name" value="SAM_RNA_A_N6_MT"/>
    <property type="match status" value="1"/>
</dbReference>
<accession>Q2KXA2</accession>
<comment type="function">
    <text evidence="1">Specifically dimethylates two adjacent adenosines (A1518 and A1519) in the loop of a conserved hairpin near the 3'-end of 16S rRNA in the 30S particle. May play a critical role in biogenesis of 30S subunits.</text>
</comment>
<comment type="catalytic activity">
    <reaction evidence="1">
        <text>adenosine(1518)/adenosine(1519) in 16S rRNA + 4 S-adenosyl-L-methionine = N(6)-dimethyladenosine(1518)/N(6)-dimethyladenosine(1519) in 16S rRNA + 4 S-adenosyl-L-homocysteine + 4 H(+)</text>
        <dbReference type="Rhea" id="RHEA:19609"/>
        <dbReference type="Rhea" id="RHEA-COMP:10232"/>
        <dbReference type="Rhea" id="RHEA-COMP:10233"/>
        <dbReference type="ChEBI" id="CHEBI:15378"/>
        <dbReference type="ChEBI" id="CHEBI:57856"/>
        <dbReference type="ChEBI" id="CHEBI:59789"/>
        <dbReference type="ChEBI" id="CHEBI:74411"/>
        <dbReference type="ChEBI" id="CHEBI:74493"/>
        <dbReference type="EC" id="2.1.1.182"/>
    </reaction>
</comment>
<comment type="subcellular location">
    <subcellularLocation>
        <location evidence="1">Cytoplasm</location>
    </subcellularLocation>
</comment>
<comment type="similarity">
    <text evidence="1">Belongs to the class I-like SAM-binding methyltransferase superfamily. rRNA adenine N(6)-methyltransferase family. RsmA subfamily.</text>
</comment>
<name>RSMA_BORA1</name>